<comment type="subunit">
    <text evidence="1">Component of the mitochondrial ribosome large subunit (39S) which comprises a 16S rRNA and about 50 distinct proteins (By similarity).</text>
</comment>
<comment type="subcellular location">
    <subcellularLocation>
        <location evidence="1">Mitochondrion</location>
    </subcellularLocation>
</comment>
<comment type="similarity">
    <text evidence="3">Belongs to the mitochondrion-specific ribosomal protein mL51 family.</text>
</comment>
<keyword id="KW-0496">Mitochondrion</keyword>
<keyword id="KW-1185">Reference proteome</keyword>
<keyword id="KW-0687">Ribonucleoprotein</keyword>
<keyword id="KW-0689">Ribosomal protein</keyword>
<keyword id="KW-0809">Transit peptide</keyword>
<reference key="1">
    <citation type="journal article" date="2003" name="PLoS Biol.">
        <title>The genome sequence of Caenorhabditis briggsae: a platform for comparative genomics.</title>
        <authorList>
            <person name="Stein L.D."/>
            <person name="Bao Z."/>
            <person name="Blasiar D."/>
            <person name="Blumenthal T."/>
            <person name="Brent M.R."/>
            <person name="Chen N."/>
            <person name="Chinwalla A."/>
            <person name="Clarke L."/>
            <person name="Clee C."/>
            <person name="Coghlan A."/>
            <person name="Coulson A."/>
            <person name="D'Eustachio P."/>
            <person name="Fitch D.H.A."/>
            <person name="Fulton L.A."/>
            <person name="Fulton R.E."/>
            <person name="Griffiths-Jones S."/>
            <person name="Harris T.W."/>
            <person name="Hillier L.W."/>
            <person name="Kamath R."/>
            <person name="Kuwabara P.E."/>
            <person name="Mardis E.R."/>
            <person name="Marra M.A."/>
            <person name="Miner T.L."/>
            <person name="Minx P."/>
            <person name="Mullikin J.C."/>
            <person name="Plumb R.W."/>
            <person name="Rogers J."/>
            <person name="Schein J.E."/>
            <person name="Sohrmann M."/>
            <person name="Spieth J."/>
            <person name="Stajich J.E."/>
            <person name="Wei C."/>
            <person name="Willey D."/>
            <person name="Wilson R.K."/>
            <person name="Durbin R.M."/>
            <person name="Waterston R.H."/>
        </authorList>
    </citation>
    <scope>NUCLEOTIDE SEQUENCE [LARGE SCALE GENOMIC DNA]</scope>
    <source>
        <strain>AF16</strain>
    </source>
</reference>
<protein>
    <recommendedName>
        <fullName evidence="3">Large ribosomal subunit protein mL51</fullName>
    </recommendedName>
    <alternativeName>
        <fullName>39S ribosomal protein L51, mitochondrial</fullName>
        <shortName>L51mt</shortName>
        <shortName>MRP-L51</shortName>
    </alternativeName>
</protein>
<dbReference type="EMBL" id="HE600986">
    <property type="protein sequence ID" value="CAP26189.1"/>
    <property type="molecule type" value="Genomic_DNA"/>
</dbReference>
<dbReference type="FunCoup" id="Q61SE7">
    <property type="interactions" value="223"/>
</dbReference>
<dbReference type="STRING" id="6238.Q61SE7"/>
<dbReference type="EnsemblMetazoa" id="CBG06212.1">
    <property type="protein sequence ID" value="CBG06212.1"/>
    <property type="gene ID" value="WBGene00028519"/>
</dbReference>
<dbReference type="KEGG" id="cbr:CBG_06212"/>
<dbReference type="CTD" id="8575441"/>
<dbReference type="WormBase" id="CBG06212">
    <property type="protein sequence ID" value="CBP01649"/>
    <property type="gene ID" value="WBGene00028519"/>
    <property type="gene designation" value="Cbr-mrpl-51"/>
</dbReference>
<dbReference type="eggNOG" id="KOG4045">
    <property type="taxonomic scope" value="Eukaryota"/>
</dbReference>
<dbReference type="HOGENOM" id="CLU_098800_0_0_1"/>
<dbReference type="InParanoid" id="Q61SE7"/>
<dbReference type="OMA" id="YRYHRPG"/>
<dbReference type="OrthoDB" id="10059330at2759"/>
<dbReference type="Proteomes" id="UP000008549">
    <property type="component" value="Unassembled WGS sequence"/>
</dbReference>
<dbReference type="GO" id="GO:0005762">
    <property type="term" value="C:mitochondrial large ribosomal subunit"/>
    <property type="evidence" value="ECO:0000250"/>
    <property type="project" value="UniProtKB"/>
</dbReference>
<dbReference type="GO" id="GO:0003735">
    <property type="term" value="F:structural constituent of ribosome"/>
    <property type="evidence" value="ECO:0000250"/>
    <property type="project" value="UniProtKB"/>
</dbReference>
<dbReference type="GO" id="GO:0006412">
    <property type="term" value="P:translation"/>
    <property type="evidence" value="ECO:0000250"/>
    <property type="project" value="UniProtKB"/>
</dbReference>
<dbReference type="InterPro" id="IPR019373">
    <property type="entry name" value="Ribosomal_mL51"/>
</dbReference>
<dbReference type="PANTHER" id="PTHR13409:SF0">
    <property type="entry name" value="LARGE RIBOSOMAL SUBUNIT PROTEIN ML51"/>
    <property type="match status" value="1"/>
</dbReference>
<dbReference type="PANTHER" id="PTHR13409">
    <property type="entry name" value="MITOCHONDRIAL 39S RIBOSOMAL PROTEIN L51"/>
    <property type="match status" value="1"/>
</dbReference>
<dbReference type="Pfam" id="PF10244">
    <property type="entry name" value="MRP-L51"/>
    <property type="match status" value="1"/>
</dbReference>
<name>RM51_CAEBR</name>
<feature type="transit peptide" description="Mitochondrion" evidence="2">
    <location>
        <begin position="1"/>
        <end position="15"/>
    </location>
</feature>
<feature type="chain" id="PRO_0000273088" description="Large ribosomal subunit protein mL51">
    <location>
        <begin position="16"/>
        <end position="199"/>
    </location>
</feature>
<accession>Q61SE7</accession>
<accession>A8X0M9</accession>
<evidence type="ECO:0000250" key="1">
    <source>
        <dbReference type="UniProtKB" id="Q4U2R6"/>
    </source>
</evidence>
<evidence type="ECO:0000255" key="2"/>
<evidence type="ECO:0000305" key="3"/>
<proteinExistence type="inferred from homology"/>
<organism>
    <name type="scientific">Caenorhabditis briggsae</name>
    <dbReference type="NCBI Taxonomy" id="6238"/>
    <lineage>
        <taxon>Eukaryota</taxon>
        <taxon>Metazoa</taxon>
        <taxon>Ecdysozoa</taxon>
        <taxon>Nematoda</taxon>
        <taxon>Chromadorea</taxon>
        <taxon>Rhabditida</taxon>
        <taxon>Rhabditina</taxon>
        <taxon>Rhabditomorpha</taxon>
        <taxon>Rhabditoidea</taxon>
        <taxon>Rhabditidae</taxon>
        <taxon>Peloderinae</taxon>
        <taxon>Caenorhabditis</taxon>
    </lineage>
</organism>
<gene>
    <name type="primary">mrpl-51</name>
    <name type="ORF">CBG06212</name>
</gene>
<sequence>MNSASISRLTSVIRTTSVRGFHDRSSVPRVVDDREKSSAKYNDAGYTFRYHQQGVDPLPRIPDCKVPVARPNYKVRDQWNDEAARFGQNDYIDLLGDGSVHPAQLQYHTPTWLRGFPGQHKANELIKLIHYRNLYDSKLKQNSPKRWHELRKRIKYLMMQHNYNKQDEIGRERNLGLWEEEPDYTYKDKSRRSFRDEIH</sequence>